<organism>
    <name type="scientific">Escherichia coli O139:H28 (strain E24377A / ETEC)</name>
    <dbReference type="NCBI Taxonomy" id="331111"/>
    <lineage>
        <taxon>Bacteria</taxon>
        <taxon>Pseudomonadati</taxon>
        <taxon>Pseudomonadota</taxon>
        <taxon>Gammaproteobacteria</taxon>
        <taxon>Enterobacterales</taxon>
        <taxon>Enterobacteriaceae</taxon>
        <taxon>Escherichia</taxon>
    </lineage>
</organism>
<name>QUEF_ECO24</name>
<dbReference type="EC" id="1.7.1.13" evidence="1"/>
<dbReference type="EMBL" id="CP000800">
    <property type="protein sequence ID" value="ABV19675.1"/>
    <property type="molecule type" value="Genomic_DNA"/>
</dbReference>
<dbReference type="RefSeq" id="WP_000100430.1">
    <property type="nucleotide sequence ID" value="NC_009801.1"/>
</dbReference>
<dbReference type="SMR" id="A7ZQN7"/>
<dbReference type="GeneID" id="75203815"/>
<dbReference type="KEGG" id="ecw:EcE24377A_3099"/>
<dbReference type="HOGENOM" id="CLU_054738_0_0_6"/>
<dbReference type="UniPathway" id="UPA00392"/>
<dbReference type="Proteomes" id="UP000001122">
    <property type="component" value="Chromosome"/>
</dbReference>
<dbReference type="GO" id="GO:0005737">
    <property type="term" value="C:cytoplasm"/>
    <property type="evidence" value="ECO:0007669"/>
    <property type="project" value="UniProtKB-SubCell"/>
</dbReference>
<dbReference type="GO" id="GO:0033739">
    <property type="term" value="F:preQ1 synthase activity"/>
    <property type="evidence" value="ECO:0007669"/>
    <property type="project" value="UniProtKB-UniRule"/>
</dbReference>
<dbReference type="GO" id="GO:0008616">
    <property type="term" value="P:queuosine biosynthetic process"/>
    <property type="evidence" value="ECO:0007669"/>
    <property type="project" value="UniProtKB-UniRule"/>
</dbReference>
<dbReference type="GO" id="GO:0006400">
    <property type="term" value="P:tRNA modification"/>
    <property type="evidence" value="ECO:0007669"/>
    <property type="project" value="UniProtKB-UniRule"/>
</dbReference>
<dbReference type="FunFam" id="3.30.1130.10:FF:000004">
    <property type="entry name" value="NADPH-dependent 7-cyano-7-deazaguanine reductase"/>
    <property type="match status" value="1"/>
</dbReference>
<dbReference type="FunFam" id="3.30.1130.10:FF:000006">
    <property type="entry name" value="NADPH-dependent 7-cyano-7-deazaguanine reductase"/>
    <property type="match status" value="1"/>
</dbReference>
<dbReference type="Gene3D" id="3.30.1130.10">
    <property type="match status" value="2"/>
</dbReference>
<dbReference type="HAMAP" id="MF_00817">
    <property type="entry name" value="QueF_type2"/>
    <property type="match status" value="1"/>
</dbReference>
<dbReference type="InterPro" id="IPR043133">
    <property type="entry name" value="GTP-CH-I_C/QueF"/>
</dbReference>
<dbReference type="InterPro" id="IPR050084">
    <property type="entry name" value="NADPH_dep_7-cyano-7-deazaG_red"/>
</dbReference>
<dbReference type="InterPro" id="IPR029500">
    <property type="entry name" value="QueF"/>
</dbReference>
<dbReference type="InterPro" id="IPR029139">
    <property type="entry name" value="QueF_N"/>
</dbReference>
<dbReference type="InterPro" id="IPR016428">
    <property type="entry name" value="QueF_type2"/>
</dbReference>
<dbReference type="NCBIfam" id="TIGR03138">
    <property type="entry name" value="QueF"/>
    <property type="match status" value="1"/>
</dbReference>
<dbReference type="PANTHER" id="PTHR34354">
    <property type="entry name" value="NADPH-DEPENDENT 7-CYANO-7-DEAZAGUANINE REDUCTASE"/>
    <property type="match status" value="1"/>
</dbReference>
<dbReference type="PANTHER" id="PTHR34354:SF1">
    <property type="entry name" value="NADPH-DEPENDENT 7-CYANO-7-DEAZAGUANINE REDUCTASE"/>
    <property type="match status" value="1"/>
</dbReference>
<dbReference type="Pfam" id="PF14489">
    <property type="entry name" value="QueF"/>
    <property type="match status" value="1"/>
</dbReference>
<dbReference type="Pfam" id="PF14819">
    <property type="entry name" value="QueF_N"/>
    <property type="match status" value="1"/>
</dbReference>
<dbReference type="PIRSF" id="PIRSF004750">
    <property type="entry name" value="Nitrile_oxidored_YqcD_prd"/>
    <property type="match status" value="1"/>
</dbReference>
<dbReference type="SUPFAM" id="SSF55620">
    <property type="entry name" value="Tetrahydrobiopterin biosynthesis enzymes-like"/>
    <property type="match status" value="1"/>
</dbReference>
<protein>
    <recommendedName>
        <fullName evidence="1">NADPH-dependent 7-cyano-7-deazaguanine reductase</fullName>
        <ecNumber evidence="1">1.7.1.13</ecNumber>
    </recommendedName>
    <alternativeName>
        <fullName evidence="1">7-cyano-7-carbaguanine reductase</fullName>
    </alternativeName>
    <alternativeName>
        <fullName evidence="1">NADPH-dependent nitrile oxidoreductase</fullName>
    </alternativeName>
    <alternativeName>
        <fullName evidence="1">PreQ(0) reductase</fullName>
    </alternativeName>
</protein>
<comment type="function">
    <text evidence="1">Catalyzes the NADPH-dependent reduction of 7-cyano-7-deazaguanine (preQ0) to 7-aminomethyl-7-deazaguanine (preQ1).</text>
</comment>
<comment type="catalytic activity">
    <reaction evidence="1">
        <text>7-aminomethyl-7-carbaguanine + 2 NADP(+) = 7-cyano-7-deazaguanine + 2 NADPH + 3 H(+)</text>
        <dbReference type="Rhea" id="RHEA:13409"/>
        <dbReference type="ChEBI" id="CHEBI:15378"/>
        <dbReference type="ChEBI" id="CHEBI:45075"/>
        <dbReference type="ChEBI" id="CHEBI:57783"/>
        <dbReference type="ChEBI" id="CHEBI:58349"/>
        <dbReference type="ChEBI" id="CHEBI:58703"/>
        <dbReference type="EC" id="1.7.1.13"/>
    </reaction>
</comment>
<comment type="pathway">
    <text evidence="1">tRNA modification; tRNA-queuosine biosynthesis.</text>
</comment>
<comment type="subunit">
    <text evidence="1">Homodimer.</text>
</comment>
<comment type="subcellular location">
    <subcellularLocation>
        <location evidence="1">Cytoplasm</location>
    </subcellularLocation>
</comment>
<comment type="similarity">
    <text evidence="1">Belongs to the GTP cyclohydrolase I family. QueF type 2 subfamily.</text>
</comment>
<keyword id="KW-0963">Cytoplasm</keyword>
<keyword id="KW-0521">NADP</keyword>
<keyword id="KW-0560">Oxidoreductase</keyword>
<keyword id="KW-0671">Queuosine biosynthesis</keyword>
<keyword id="KW-1185">Reference proteome</keyword>
<proteinExistence type="inferred from homology"/>
<sequence length="282" mass="32557">MSSYANHQALAGLTLGKSTDYRDTYDASLLQGVPRSLNRDPLGLKADNLPFHGTDIWTLYELSWLNAKGLPQVAVGHVELDYTSVNLIESKSFKLYLNSFNQTRFNNWDEVRQTLERDLSTCAQGKVSVALYRLDELEGQPIGHFNGTCIDDQDITIDNYEFTTDYLENATSGEKVVEETLVSHLLKSNCLITHQPDWGSIQIQYRGRQIDREKLLRYLVSFRHHNEFHEQCVERIFNDLLRFCQPEKLSVYARYTRRGGLDINPWRSNSDFVPSTTRLVRQ</sequence>
<reference key="1">
    <citation type="journal article" date="2008" name="J. Bacteriol.">
        <title>The pangenome structure of Escherichia coli: comparative genomic analysis of E. coli commensal and pathogenic isolates.</title>
        <authorList>
            <person name="Rasko D.A."/>
            <person name="Rosovitz M.J."/>
            <person name="Myers G.S.A."/>
            <person name="Mongodin E.F."/>
            <person name="Fricke W.F."/>
            <person name="Gajer P."/>
            <person name="Crabtree J."/>
            <person name="Sebaihia M."/>
            <person name="Thomson N.R."/>
            <person name="Chaudhuri R."/>
            <person name="Henderson I.R."/>
            <person name="Sperandio V."/>
            <person name="Ravel J."/>
        </authorList>
    </citation>
    <scope>NUCLEOTIDE SEQUENCE [LARGE SCALE GENOMIC DNA]</scope>
    <source>
        <strain>E24377A / ETEC</strain>
    </source>
</reference>
<evidence type="ECO:0000255" key="1">
    <source>
        <dbReference type="HAMAP-Rule" id="MF_00817"/>
    </source>
</evidence>
<gene>
    <name evidence="1" type="primary">queF</name>
    <name type="ordered locus">EcE24377A_3099</name>
</gene>
<accession>A7ZQN7</accession>
<feature type="chain" id="PRO_1000062338" description="NADPH-dependent 7-cyano-7-deazaguanine reductase">
    <location>
        <begin position="1"/>
        <end position="282"/>
    </location>
</feature>
<feature type="active site" description="Thioimide intermediate" evidence="1">
    <location>
        <position position="190"/>
    </location>
</feature>
<feature type="active site" description="Proton donor" evidence="1">
    <location>
        <position position="197"/>
    </location>
</feature>
<feature type="binding site" evidence="1">
    <location>
        <begin position="88"/>
        <end position="90"/>
    </location>
    <ligand>
        <name>substrate</name>
    </ligand>
</feature>
<feature type="binding site" evidence="1">
    <location>
        <begin position="90"/>
        <end position="91"/>
    </location>
    <ligand>
        <name>NADPH</name>
        <dbReference type="ChEBI" id="CHEBI:57783"/>
    </ligand>
</feature>
<feature type="binding site" evidence="1">
    <location>
        <begin position="229"/>
        <end position="230"/>
    </location>
    <ligand>
        <name>substrate</name>
    </ligand>
</feature>
<feature type="binding site" evidence="1">
    <location>
        <begin position="258"/>
        <end position="259"/>
    </location>
    <ligand>
        <name>NADPH</name>
        <dbReference type="ChEBI" id="CHEBI:57783"/>
    </ligand>
</feature>